<reference key="1">
    <citation type="journal article" date="2015" name="Genome Announc.">
        <title>Genome sequence of Aspergillus flavus NRRL 3357, a strain that causes aflatoxin contamination of food and feed.</title>
        <authorList>
            <person name="Nierman W.C."/>
            <person name="Yu J."/>
            <person name="Fedorova-Abrams N.D."/>
            <person name="Losada L."/>
            <person name="Cleveland T.E."/>
            <person name="Bhatnagar D."/>
            <person name="Bennett J.W."/>
            <person name="Dean R."/>
            <person name="Payne G.A."/>
        </authorList>
    </citation>
    <scope>NUCLEOTIDE SEQUENCE [LARGE SCALE GENOMIC DNA]</scope>
    <source>
        <strain>ATCC 200026 / FGSC A1120 / IAM 13836 / NRRL 3357 / JCM 12722 / SRRC 167</strain>
    </source>
</reference>
<reference key="2">
    <citation type="journal article" date="2013" name="PLoS ONE">
        <title>Identification of new sphingomyelinases D in pathogenic fungi and other pathogenic organisms.</title>
        <authorList>
            <person name="Dias-Lopes C."/>
            <person name="Neshich I.A."/>
            <person name="Neshich G."/>
            <person name="Ortega J.M."/>
            <person name="Granier C."/>
            <person name="Chavez-Olortegui C."/>
            <person name="Molina F."/>
            <person name="Felicori L."/>
        </authorList>
    </citation>
    <scope>IDENTIFICATION</scope>
    <scope>CATALYTIC ACTIVITY</scope>
    <scope>ACTIVITY REGULATION</scope>
    <scope>DOMAIN</scope>
    <scope>FUNCTION</scope>
</reference>
<sequence length="289" mass="32525">MQSISVLICVLLALSILNFTVASLTQRPIYAIAHRVLRNEAVTAALSHGANALEVDLTAWYFGWWADHDGKLFSAGSTARDLFKFIAQKQWTKDYNISFVWLDIKNPDFCRKGRPCSIEALRDLAREILEPAGIRVLYGFFETAESRGFKVIRDGLNSNEAVVLSGETSTILHLYNISGAGIPVKQMVMDFGDSWLRKGVDIYPELRYGSWKRDHGKLGKVFSWTSAQGDTEMVRYLLREAGIDGLIYGYQTDEYNDKSGPKSALKDIVDFVEAHSDTHRMATEDDAPW</sequence>
<protein>
    <recommendedName>
        <fullName evidence="4">Sphingomyelinase D</fullName>
        <shortName evidence="4">SMase D</shortName>
        <ecNumber evidence="3">3.1.4.41</ecNumber>
    </recommendedName>
</protein>
<comment type="function">
    <text evidence="3">Catalyzes the hydrolysis of sphingomyelin. Sphingomyelinases D are produced by some spider in their venoms, but also by arthropods such as ticks, or pathogenic bacteria and fungi. They might play a role in pathogenicity through different mechanisms, such as membrane destabilization and host cell penetration, but also pulmonary inflammation and cutaneous lesions.</text>
</comment>
<comment type="catalytic activity">
    <reaction evidence="3">
        <text>a sphingomyelin + H2O = an N-acylsphing-4-enine 1-phosphate + choline + H(+)</text>
        <dbReference type="Rhea" id="RHEA:20984"/>
        <dbReference type="ChEBI" id="CHEBI:15354"/>
        <dbReference type="ChEBI" id="CHEBI:15377"/>
        <dbReference type="ChEBI" id="CHEBI:15378"/>
        <dbReference type="ChEBI" id="CHEBI:17636"/>
        <dbReference type="ChEBI" id="CHEBI:57674"/>
        <dbReference type="EC" id="3.1.4.41"/>
    </reaction>
</comment>
<comment type="cofactor">
    <cofactor evidence="1">
        <name>Mg(2+)</name>
        <dbReference type="ChEBI" id="CHEBI:18420"/>
    </cofactor>
    <text evidence="1">Binds 1 Mg(2+) ion per subunit.</text>
</comment>
<comment type="activity regulation">
    <text evidence="3">Sphingomyelinase activity is reduced by 33 percent following addition of EDTA.</text>
</comment>
<comment type="subcellular location">
    <subcellularLocation>
        <location evidence="5">Secreted</location>
    </subcellularLocation>
</comment>
<comment type="domain">
    <text evidence="4">The SMD-tail motif is highly conserved and may be responsible for structural stabilization.</text>
</comment>
<comment type="similarity">
    <text evidence="5">Belongs to the sphingomyelinase D/phospholipase D family.</text>
</comment>
<keyword id="KW-0378">Hydrolase</keyword>
<keyword id="KW-0442">Lipid degradation</keyword>
<keyword id="KW-0443">Lipid metabolism</keyword>
<keyword id="KW-0460">Magnesium</keyword>
<keyword id="KW-0479">Metal-binding</keyword>
<keyword id="KW-0964">Secreted</keyword>
<keyword id="KW-0732">Signal</keyword>
<keyword id="KW-0843">Virulence</keyword>
<proteinExistence type="evidence at protein level"/>
<name>SMD_ASPFN</name>
<evidence type="ECO:0000250" key="1">
    <source>
        <dbReference type="UniProtKB" id="Q8I914"/>
    </source>
</evidence>
<evidence type="ECO:0000255" key="2"/>
<evidence type="ECO:0000269" key="3">
    <source>
    </source>
</evidence>
<evidence type="ECO:0000303" key="4">
    <source>
    </source>
</evidence>
<evidence type="ECO:0000305" key="5"/>
<evidence type="ECO:0000312" key="6">
    <source>
        <dbReference type="EMBL" id="EED47801.1"/>
    </source>
</evidence>
<gene>
    <name evidence="6" type="ORF">AFLA_004420</name>
</gene>
<feature type="signal peptide" evidence="2">
    <location>
        <begin position="1"/>
        <end position="22"/>
    </location>
</feature>
<feature type="chain" id="PRO_0000431992" description="Sphingomyelinase D" evidence="2">
    <location>
        <begin position="23"/>
        <end position="289"/>
    </location>
</feature>
<feature type="short sequence motif" description="SMD-tail" evidence="2">
    <location>
        <begin position="282"/>
        <end position="289"/>
    </location>
</feature>
<feature type="active site" evidence="1">
    <location>
        <position position="34"/>
    </location>
</feature>
<feature type="binding site" evidence="1">
    <location>
        <position position="54"/>
    </location>
    <ligand>
        <name>Mg(2+)</name>
        <dbReference type="ChEBI" id="CHEBI:18420"/>
    </ligand>
</feature>
<feature type="binding site" evidence="1">
    <location>
        <position position="56"/>
    </location>
    <ligand>
        <name>Mg(2+)</name>
        <dbReference type="ChEBI" id="CHEBI:18420"/>
    </ligand>
</feature>
<feature type="binding site" evidence="1">
    <location>
        <position position="103"/>
    </location>
    <ligand>
        <name>Mg(2+)</name>
        <dbReference type="ChEBI" id="CHEBI:18420"/>
    </ligand>
</feature>
<organism>
    <name type="scientific">Aspergillus flavus (strain ATCC 200026 / FGSC A1120 / IAM 13836 / NRRL 3357 / JCM 12722 / SRRC 167)</name>
    <dbReference type="NCBI Taxonomy" id="332952"/>
    <lineage>
        <taxon>Eukaryota</taxon>
        <taxon>Fungi</taxon>
        <taxon>Dikarya</taxon>
        <taxon>Ascomycota</taxon>
        <taxon>Pezizomycotina</taxon>
        <taxon>Eurotiomycetes</taxon>
        <taxon>Eurotiomycetidae</taxon>
        <taxon>Eurotiales</taxon>
        <taxon>Aspergillaceae</taxon>
        <taxon>Aspergillus</taxon>
        <taxon>Aspergillus subgen. Circumdati</taxon>
    </lineage>
</organism>
<dbReference type="EC" id="3.1.4.41" evidence="3"/>
<dbReference type="EMBL" id="EQ963482">
    <property type="protein sequence ID" value="EED47801.1"/>
    <property type="molecule type" value="Genomic_DNA"/>
</dbReference>
<dbReference type="RefSeq" id="XP_002382643.1">
    <property type="nucleotide sequence ID" value="XM_002382602.1"/>
</dbReference>
<dbReference type="SMR" id="B8NQ51"/>
<dbReference type="STRING" id="332952.B8NQ51"/>
<dbReference type="EnsemblFungi" id="EED47801">
    <property type="protein sequence ID" value="EED47801"/>
    <property type="gene ID" value="AFLA_004420"/>
</dbReference>
<dbReference type="VEuPathDB" id="FungiDB:AFLA_011778"/>
<dbReference type="eggNOG" id="ENOG502S5U7">
    <property type="taxonomic scope" value="Eukaryota"/>
</dbReference>
<dbReference type="HOGENOM" id="CLU_059400_0_0_1"/>
<dbReference type="OMA" id="WADHDGK"/>
<dbReference type="GO" id="GO:0005576">
    <property type="term" value="C:extracellular region"/>
    <property type="evidence" value="ECO:0007669"/>
    <property type="project" value="UniProtKB-SubCell"/>
</dbReference>
<dbReference type="GO" id="GO:0046872">
    <property type="term" value="F:metal ion binding"/>
    <property type="evidence" value="ECO:0007669"/>
    <property type="project" value="UniProtKB-KW"/>
</dbReference>
<dbReference type="GO" id="GO:0050290">
    <property type="term" value="F:sphingomyelin phosphodiesterase D activity"/>
    <property type="evidence" value="ECO:0007669"/>
    <property type="project" value="UniProtKB-EC"/>
</dbReference>
<dbReference type="GO" id="GO:0016042">
    <property type="term" value="P:lipid catabolic process"/>
    <property type="evidence" value="ECO:0007669"/>
    <property type="project" value="UniProtKB-KW"/>
</dbReference>
<dbReference type="CDD" id="cd08576">
    <property type="entry name" value="GDPD_like_SMaseD_PLD"/>
    <property type="match status" value="1"/>
</dbReference>
<dbReference type="Gene3D" id="3.20.20.190">
    <property type="entry name" value="Phosphatidylinositol (PI) phosphodiesterase"/>
    <property type="match status" value="1"/>
</dbReference>
<dbReference type="InterPro" id="IPR017946">
    <property type="entry name" value="PLC-like_Pdiesterase_TIM-brl"/>
</dbReference>
<dbReference type="InterPro" id="IPR016674">
    <property type="entry name" value="SMase_D/PLipase_D"/>
</dbReference>
<dbReference type="PIRSF" id="PIRSF016632">
    <property type="entry name" value="Phospholipase_actinobac/fun"/>
    <property type="match status" value="1"/>
</dbReference>
<dbReference type="SUPFAM" id="SSF51695">
    <property type="entry name" value="PLC-like phosphodiesterases"/>
    <property type="match status" value="1"/>
</dbReference>
<accession>B8NQ51</accession>